<reference key="1">
    <citation type="journal article" date="1996" name="DNA Res.">
        <title>Sequence analysis of the genome of the unicellular cyanobacterium Synechocystis sp. strain PCC6803. II. Sequence determination of the entire genome and assignment of potential protein-coding regions.</title>
        <authorList>
            <person name="Kaneko T."/>
            <person name="Sato S."/>
            <person name="Kotani H."/>
            <person name="Tanaka A."/>
            <person name="Asamizu E."/>
            <person name="Nakamura Y."/>
            <person name="Miyajima N."/>
            <person name="Hirosawa M."/>
            <person name="Sugiura M."/>
            <person name="Sasamoto S."/>
            <person name="Kimura T."/>
            <person name="Hosouchi T."/>
            <person name="Matsuno A."/>
            <person name="Muraki A."/>
            <person name="Nakazaki N."/>
            <person name="Naruo K."/>
            <person name="Okumura S."/>
            <person name="Shimpo S."/>
            <person name="Takeuchi C."/>
            <person name="Wada T."/>
            <person name="Watanabe A."/>
            <person name="Yamada M."/>
            <person name="Yasuda M."/>
            <person name="Tabata S."/>
        </authorList>
    </citation>
    <scope>NUCLEOTIDE SEQUENCE [LARGE SCALE GENOMIC DNA]</scope>
    <source>
        <strain>ATCC 27184 / PCC 6803 / Kazusa</strain>
    </source>
</reference>
<name>RS1B_SYNY3</name>
<comment type="function">
    <text>Binds mRNA.</text>
</comment>
<comment type="similarity">
    <text evidence="2">Belongs to the bacterial ribosomal protein bS1 family.</text>
</comment>
<sequence>MPSSSNSAAFSLDEFAKALDKHDYHAEKGQTVHGKICQHANEGVYVDFGGKSPGFVPVQELGLRPHAEIEDSFPLDSAWDFLVTSEQNDEGQVRLSRRQLQIQQSWENLAELEESGKTLEMVVTGTNKGGVVGDVEGLRGFIPRSHLMHKDNMDALVGQVLKAHILEANQDNNKLVLTQRRIQQAESMGKIAAGNIYEGKVAKIQPYGVFVEIEGVTGLLHVSQVSGTRVDSLNTLFAFGQAISVYVQEIDEYKNRISLSTRILETYPGELVEKFDEMMADAPNRLPLVQSKQNLGDKQEQLEKS</sequence>
<gene>
    <name type="primary">rps1b</name>
    <name type="ordered locus">slr1984</name>
</gene>
<evidence type="ECO:0000255" key="1">
    <source>
        <dbReference type="PROSITE-ProRule" id="PRU00180"/>
    </source>
</evidence>
<evidence type="ECO:0000305" key="2"/>
<feature type="chain" id="PRO_0000196059" description="Small ribosomal subunit protein bS1B">
    <location>
        <begin position="1"/>
        <end position="305"/>
    </location>
</feature>
<feature type="domain" description="S1 motif 1" evidence="1">
    <location>
        <begin position="29"/>
        <end position="98"/>
    </location>
</feature>
<feature type="domain" description="S1 motif 2" evidence="1">
    <location>
        <begin position="116"/>
        <end position="180"/>
    </location>
</feature>
<feature type="domain" description="S1 motif 3" evidence="1">
    <location>
        <begin position="194"/>
        <end position="262"/>
    </location>
</feature>
<accession>P74142</accession>
<dbReference type="EMBL" id="BA000022">
    <property type="protein sequence ID" value="BAA18228.1"/>
    <property type="molecule type" value="Genomic_DNA"/>
</dbReference>
<dbReference type="PIR" id="S75667">
    <property type="entry name" value="S75667"/>
</dbReference>
<dbReference type="SMR" id="P74142"/>
<dbReference type="FunCoup" id="P74142">
    <property type="interactions" value="545"/>
</dbReference>
<dbReference type="IntAct" id="P74142">
    <property type="interactions" value="1"/>
</dbReference>
<dbReference type="STRING" id="1148.gene:10499101"/>
<dbReference type="PaxDb" id="1148-1653313"/>
<dbReference type="EnsemblBacteria" id="BAA18228">
    <property type="protein sequence ID" value="BAA18228"/>
    <property type="gene ID" value="BAA18228"/>
</dbReference>
<dbReference type="KEGG" id="syn:slr1984"/>
<dbReference type="eggNOG" id="COG0539">
    <property type="taxonomic scope" value="Bacteria"/>
</dbReference>
<dbReference type="InParanoid" id="P74142"/>
<dbReference type="PhylomeDB" id="P74142"/>
<dbReference type="Proteomes" id="UP000001425">
    <property type="component" value="Chromosome"/>
</dbReference>
<dbReference type="GO" id="GO:1990904">
    <property type="term" value="C:ribonucleoprotein complex"/>
    <property type="evidence" value="ECO:0007669"/>
    <property type="project" value="UniProtKB-KW"/>
</dbReference>
<dbReference type="GO" id="GO:0005840">
    <property type="term" value="C:ribosome"/>
    <property type="evidence" value="ECO:0007669"/>
    <property type="project" value="UniProtKB-KW"/>
</dbReference>
<dbReference type="GO" id="GO:0003729">
    <property type="term" value="F:mRNA binding"/>
    <property type="evidence" value="ECO:0000318"/>
    <property type="project" value="GO_Central"/>
</dbReference>
<dbReference type="GO" id="GO:0003735">
    <property type="term" value="F:structural constituent of ribosome"/>
    <property type="evidence" value="ECO:0000318"/>
    <property type="project" value="GO_Central"/>
</dbReference>
<dbReference type="GO" id="GO:0006412">
    <property type="term" value="P:translation"/>
    <property type="evidence" value="ECO:0000318"/>
    <property type="project" value="GO_Central"/>
</dbReference>
<dbReference type="CDD" id="cd04465">
    <property type="entry name" value="S1_RPS1_repeat_ec2_hs2"/>
    <property type="match status" value="1"/>
</dbReference>
<dbReference type="Gene3D" id="2.40.50.140">
    <property type="entry name" value="Nucleic acid-binding proteins"/>
    <property type="match status" value="3"/>
</dbReference>
<dbReference type="InterPro" id="IPR012340">
    <property type="entry name" value="NA-bd_OB-fold"/>
</dbReference>
<dbReference type="InterPro" id="IPR050437">
    <property type="entry name" value="Ribos_protein_bS1-like"/>
</dbReference>
<dbReference type="InterPro" id="IPR035104">
    <property type="entry name" value="Ribosomal_protein_S1-like"/>
</dbReference>
<dbReference type="InterPro" id="IPR003029">
    <property type="entry name" value="S1_domain"/>
</dbReference>
<dbReference type="PANTHER" id="PTHR10724">
    <property type="entry name" value="30S RIBOSOMAL PROTEIN S1"/>
    <property type="match status" value="1"/>
</dbReference>
<dbReference type="PANTHER" id="PTHR10724:SF7">
    <property type="entry name" value="SMALL RIBOSOMAL SUBUNIT PROTEIN BS1C"/>
    <property type="match status" value="1"/>
</dbReference>
<dbReference type="Pfam" id="PF00575">
    <property type="entry name" value="S1"/>
    <property type="match status" value="3"/>
</dbReference>
<dbReference type="PRINTS" id="PR00681">
    <property type="entry name" value="RIBOSOMALS1"/>
</dbReference>
<dbReference type="SMART" id="SM00316">
    <property type="entry name" value="S1"/>
    <property type="match status" value="3"/>
</dbReference>
<dbReference type="SUPFAM" id="SSF50249">
    <property type="entry name" value="Nucleic acid-binding proteins"/>
    <property type="match status" value="3"/>
</dbReference>
<dbReference type="PROSITE" id="PS50126">
    <property type="entry name" value="S1"/>
    <property type="match status" value="3"/>
</dbReference>
<organism>
    <name type="scientific">Synechocystis sp. (strain ATCC 27184 / PCC 6803 / Kazusa)</name>
    <dbReference type="NCBI Taxonomy" id="1111708"/>
    <lineage>
        <taxon>Bacteria</taxon>
        <taxon>Bacillati</taxon>
        <taxon>Cyanobacteriota</taxon>
        <taxon>Cyanophyceae</taxon>
        <taxon>Synechococcales</taxon>
        <taxon>Merismopediaceae</taxon>
        <taxon>Synechocystis</taxon>
    </lineage>
</organism>
<keyword id="KW-1185">Reference proteome</keyword>
<keyword id="KW-0677">Repeat</keyword>
<keyword id="KW-0687">Ribonucleoprotein</keyword>
<keyword id="KW-0689">Ribosomal protein</keyword>
<keyword id="KW-0694">RNA-binding</keyword>
<proteinExistence type="inferred from homology"/>
<protein>
    <recommendedName>
        <fullName evidence="2">Small ribosomal subunit protein bS1B</fullName>
    </recommendedName>
    <alternativeName>
        <fullName evidence="2">30S ribosomal protein S1 B</fullName>
    </alternativeName>
</protein>